<feature type="chain" id="PRO_0000381549" description="Biotin synthase">
    <location>
        <begin position="1"/>
        <end position="332"/>
    </location>
</feature>
<feature type="domain" description="Radical SAM core" evidence="2">
    <location>
        <begin position="53"/>
        <end position="283"/>
    </location>
</feature>
<feature type="binding site" evidence="1">
    <location>
        <position position="71"/>
    </location>
    <ligand>
        <name>[4Fe-4S] cluster</name>
        <dbReference type="ChEBI" id="CHEBI:49883"/>
        <note>4Fe-4S-S-AdoMet</note>
    </ligand>
</feature>
<feature type="binding site" evidence="1">
    <location>
        <position position="75"/>
    </location>
    <ligand>
        <name>[4Fe-4S] cluster</name>
        <dbReference type="ChEBI" id="CHEBI:49883"/>
        <note>4Fe-4S-S-AdoMet</note>
    </ligand>
</feature>
<feature type="binding site" evidence="1">
    <location>
        <position position="78"/>
    </location>
    <ligand>
        <name>[4Fe-4S] cluster</name>
        <dbReference type="ChEBI" id="CHEBI:49883"/>
        <note>4Fe-4S-S-AdoMet</note>
    </ligand>
</feature>
<feature type="binding site" evidence="1">
    <location>
        <position position="150"/>
    </location>
    <ligand>
        <name>[2Fe-2S] cluster</name>
        <dbReference type="ChEBI" id="CHEBI:190135"/>
    </ligand>
</feature>
<feature type="binding site" evidence="1">
    <location>
        <position position="211"/>
    </location>
    <ligand>
        <name>[2Fe-2S] cluster</name>
        <dbReference type="ChEBI" id="CHEBI:190135"/>
    </ligand>
</feature>
<feature type="binding site" evidence="1">
    <location>
        <position position="281"/>
    </location>
    <ligand>
        <name>[2Fe-2S] cluster</name>
        <dbReference type="ChEBI" id="CHEBI:190135"/>
    </ligand>
</feature>
<organism>
    <name type="scientific">Chlorobium phaeovibrioides (strain DSM 265 / 1930)</name>
    <name type="common">Prosthecochloris vibrioformis (strain DSM 265)</name>
    <dbReference type="NCBI Taxonomy" id="290318"/>
    <lineage>
        <taxon>Bacteria</taxon>
        <taxon>Pseudomonadati</taxon>
        <taxon>Chlorobiota</taxon>
        <taxon>Chlorobiia</taxon>
        <taxon>Chlorobiales</taxon>
        <taxon>Chlorobiaceae</taxon>
        <taxon>Chlorobium/Pelodictyon group</taxon>
        <taxon>Chlorobium</taxon>
    </lineage>
</organism>
<protein>
    <recommendedName>
        <fullName evidence="1">Biotin synthase</fullName>
        <ecNumber evidence="1">2.8.1.6</ecNumber>
    </recommendedName>
</protein>
<name>BIOB_CHLPM</name>
<reference key="1">
    <citation type="submission" date="2007-03" db="EMBL/GenBank/DDBJ databases">
        <title>Complete sequence of Prosthecochloris vibrioformis DSM 265.</title>
        <authorList>
            <consortium name="US DOE Joint Genome Institute"/>
            <person name="Copeland A."/>
            <person name="Lucas S."/>
            <person name="Lapidus A."/>
            <person name="Barry K."/>
            <person name="Detter J.C."/>
            <person name="Glavina del Rio T."/>
            <person name="Hammon N."/>
            <person name="Israni S."/>
            <person name="Pitluck S."/>
            <person name="Schmutz J."/>
            <person name="Larimer F."/>
            <person name="Land M."/>
            <person name="Hauser L."/>
            <person name="Mikhailova N."/>
            <person name="Li T."/>
            <person name="Overmann J."/>
            <person name="Schuster S.C."/>
            <person name="Bryant D.A."/>
            <person name="Richardson P."/>
        </authorList>
    </citation>
    <scope>NUCLEOTIDE SEQUENCE [LARGE SCALE GENOMIC DNA]</scope>
    <source>
        <strain>DSM 265 / 1930</strain>
    </source>
</reference>
<dbReference type="EC" id="2.8.1.6" evidence="1"/>
<dbReference type="EMBL" id="CP000607">
    <property type="protein sequence ID" value="ABP37721.1"/>
    <property type="status" value="ALT_INIT"/>
    <property type="molecule type" value="Genomic_DNA"/>
</dbReference>
<dbReference type="SMR" id="A4SGW2"/>
<dbReference type="STRING" id="290318.Cvib_1711"/>
<dbReference type="KEGG" id="pvi:Cvib_1711"/>
<dbReference type="eggNOG" id="COG0502">
    <property type="taxonomic scope" value="Bacteria"/>
</dbReference>
<dbReference type="HOGENOM" id="CLU_033172_2_1_10"/>
<dbReference type="OrthoDB" id="9786826at2"/>
<dbReference type="UniPathway" id="UPA00078">
    <property type="reaction ID" value="UER00162"/>
</dbReference>
<dbReference type="GO" id="GO:0051537">
    <property type="term" value="F:2 iron, 2 sulfur cluster binding"/>
    <property type="evidence" value="ECO:0007669"/>
    <property type="project" value="UniProtKB-KW"/>
</dbReference>
<dbReference type="GO" id="GO:0051539">
    <property type="term" value="F:4 iron, 4 sulfur cluster binding"/>
    <property type="evidence" value="ECO:0007669"/>
    <property type="project" value="UniProtKB-KW"/>
</dbReference>
<dbReference type="GO" id="GO:0004076">
    <property type="term" value="F:biotin synthase activity"/>
    <property type="evidence" value="ECO:0007669"/>
    <property type="project" value="UniProtKB-UniRule"/>
</dbReference>
<dbReference type="GO" id="GO:0005506">
    <property type="term" value="F:iron ion binding"/>
    <property type="evidence" value="ECO:0007669"/>
    <property type="project" value="UniProtKB-UniRule"/>
</dbReference>
<dbReference type="GO" id="GO:0009102">
    <property type="term" value="P:biotin biosynthetic process"/>
    <property type="evidence" value="ECO:0007669"/>
    <property type="project" value="UniProtKB-UniRule"/>
</dbReference>
<dbReference type="CDD" id="cd01335">
    <property type="entry name" value="Radical_SAM"/>
    <property type="match status" value="1"/>
</dbReference>
<dbReference type="Gene3D" id="3.20.20.70">
    <property type="entry name" value="Aldolase class I"/>
    <property type="match status" value="1"/>
</dbReference>
<dbReference type="HAMAP" id="MF_01694">
    <property type="entry name" value="BioB"/>
    <property type="match status" value="1"/>
</dbReference>
<dbReference type="InterPro" id="IPR013785">
    <property type="entry name" value="Aldolase_TIM"/>
</dbReference>
<dbReference type="InterPro" id="IPR010722">
    <property type="entry name" value="BATS_dom"/>
</dbReference>
<dbReference type="InterPro" id="IPR002684">
    <property type="entry name" value="Biotin_synth/BioAB"/>
</dbReference>
<dbReference type="InterPro" id="IPR024177">
    <property type="entry name" value="Biotin_synthase"/>
</dbReference>
<dbReference type="InterPro" id="IPR006638">
    <property type="entry name" value="Elp3/MiaA/NifB-like_rSAM"/>
</dbReference>
<dbReference type="InterPro" id="IPR007197">
    <property type="entry name" value="rSAM"/>
</dbReference>
<dbReference type="NCBIfam" id="TIGR00433">
    <property type="entry name" value="bioB"/>
    <property type="match status" value="1"/>
</dbReference>
<dbReference type="PANTHER" id="PTHR22976">
    <property type="entry name" value="BIOTIN SYNTHASE"/>
    <property type="match status" value="1"/>
</dbReference>
<dbReference type="PANTHER" id="PTHR22976:SF2">
    <property type="entry name" value="BIOTIN SYNTHASE, MITOCHONDRIAL"/>
    <property type="match status" value="1"/>
</dbReference>
<dbReference type="Pfam" id="PF06968">
    <property type="entry name" value="BATS"/>
    <property type="match status" value="1"/>
</dbReference>
<dbReference type="Pfam" id="PF04055">
    <property type="entry name" value="Radical_SAM"/>
    <property type="match status" value="1"/>
</dbReference>
<dbReference type="PIRSF" id="PIRSF001619">
    <property type="entry name" value="Biotin_synth"/>
    <property type="match status" value="1"/>
</dbReference>
<dbReference type="SFLD" id="SFLDG01060">
    <property type="entry name" value="BATS_domain_containing"/>
    <property type="match status" value="1"/>
</dbReference>
<dbReference type="SFLD" id="SFLDG01278">
    <property type="entry name" value="biotin_synthase_like"/>
    <property type="match status" value="1"/>
</dbReference>
<dbReference type="SMART" id="SM00876">
    <property type="entry name" value="BATS"/>
    <property type="match status" value="1"/>
</dbReference>
<dbReference type="SMART" id="SM00729">
    <property type="entry name" value="Elp3"/>
    <property type="match status" value="1"/>
</dbReference>
<dbReference type="SUPFAM" id="SSF102114">
    <property type="entry name" value="Radical SAM enzymes"/>
    <property type="match status" value="1"/>
</dbReference>
<dbReference type="PROSITE" id="PS51918">
    <property type="entry name" value="RADICAL_SAM"/>
    <property type="match status" value="1"/>
</dbReference>
<accession>A4SGW2</accession>
<keyword id="KW-0001">2Fe-2S</keyword>
<keyword id="KW-0004">4Fe-4S</keyword>
<keyword id="KW-0093">Biotin biosynthesis</keyword>
<keyword id="KW-0408">Iron</keyword>
<keyword id="KW-0411">Iron-sulfur</keyword>
<keyword id="KW-0479">Metal-binding</keyword>
<keyword id="KW-0949">S-adenosyl-L-methionine</keyword>
<keyword id="KW-0808">Transferase</keyword>
<evidence type="ECO:0000255" key="1">
    <source>
        <dbReference type="HAMAP-Rule" id="MF_01694"/>
    </source>
</evidence>
<evidence type="ECO:0000255" key="2">
    <source>
        <dbReference type="PROSITE-ProRule" id="PRU01266"/>
    </source>
</evidence>
<evidence type="ECO:0000305" key="3"/>
<comment type="function">
    <text evidence="1">Catalyzes the conversion of dethiobiotin (DTB) to biotin by the insertion of a sulfur atom into dethiobiotin via a radical-based mechanism.</text>
</comment>
<comment type="catalytic activity">
    <reaction evidence="1">
        <text>(4R,5S)-dethiobiotin + (sulfur carrier)-SH + 2 reduced [2Fe-2S]-[ferredoxin] + 2 S-adenosyl-L-methionine = (sulfur carrier)-H + biotin + 2 5'-deoxyadenosine + 2 L-methionine + 2 oxidized [2Fe-2S]-[ferredoxin]</text>
        <dbReference type="Rhea" id="RHEA:22060"/>
        <dbReference type="Rhea" id="RHEA-COMP:10000"/>
        <dbReference type="Rhea" id="RHEA-COMP:10001"/>
        <dbReference type="Rhea" id="RHEA-COMP:14737"/>
        <dbReference type="Rhea" id="RHEA-COMP:14739"/>
        <dbReference type="ChEBI" id="CHEBI:17319"/>
        <dbReference type="ChEBI" id="CHEBI:29917"/>
        <dbReference type="ChEBI" id="CHEBI:33737"/>
        <dbReference type="ChEBI" id="CHEBI:33738"/>
        <dbReference type="ChEBI" id="CHEBI:57586"/>
        <dbReference type="ChEBI" id="CHEBI:57844"/>
        <dbReference type="ChEBI" id="CHEBI:59789"/>
        <dbReference type="ChEBI" id="CHEBI:64428"/>
        <dbReference type="ChEBI" id="CHEBI:149473"/>
        <dbReference type="EC" id="2.8.1.6"/>
    </reaction>
</comment>
<comment type="cofactor">
    <cofactor evidence="1">
        <name>[4Fe-4S] cluster</name>
        <dbReference type="ChEBI" id="CHEBI:49883"/>
    </cofactor>
    <text evidence="1">Binds 1 [4Fe-4S] cluster. The cluster is coordinated with 3 cysteines and an exchangeable S-adenosyl-L-methionine.</text>
</comment>
<comment type="cofactor">
    <cofactor evidence="1">
        <name>[2Fe-2S] cluster</name>
        <dbReference type="ChEBI" id="CHEBI:190135"/>
    </cofactor>
    <text evidence="1">Binds 1 [2Fe-2S] cluster. The cluster is coordinated with 3 cysteines and 1 arginine.</text>
</comment>
<comment type="pathway">
    <text evidence="1">Cofactor biosynthesis; biotin biosynthesis; biotin from 7,8-diaminononanoate: step 2/2.</text>
</comment>
<comment type="subunit">
    <text evidence="1">Homodimer.</text>
</comment>
<comment type="similarity">
    <text evidence="1">Belongs to the radical SAM superfamily. Biotin synthase family.</text>
</comment>
<comment type="sequence caution" evidence="3">
    <conflict type="erroneous initiation">
        <sequence resource="EMBL-CDS" id="ABP37721"/>
    </conflict>
</comment>
<proteinExistence type="inferred from homology"/>
<sequence length="332" mass="36051">MDIKTLHPAIAAAYRVLETGEPISLEEAELLASLPGEFSLDLASLANKVRNRWGKGGIHACSIMNAKSGVCGENCRFCAQSRHNHADIEVYPLVDEDAVLFEARSCAEHGVSHFGLVTSGYGYRTMNAEFKRILAMIDRLHEELPELNVCASIGILGPETAAALARHGIAHYNINLQVAPEKYAGLIADTHGIEERMETVRLLRREGVNVCCGGIIGVGESMEDRVAMLFALRDLDVSVIPINVLVPIEGTPLQAAESVPLADIVKVFALARLVHPHSIIKFAAGRETLMKDFQGLLMLSGADGYLTGGYLTTRGRDLADDQRFSERLASFS</sequence>
<gene>
    <name evidence="1" type="primary">bioB</name>
    <name type="ordered locus">Cvib_1711</name>
</gene>